<evidence type="ECO:0000250" key="1"/>
<evidence type="ECO:0000250" key="2">
    <source>
        <dbReference type="UniProtKB" id="P52655"/>
    </source>
</evidence>
<evidence type="ECO:0000256" key="3">
    <source>
        <dbReference type="SAM" id="MobiDB-lite"/>
    </source>
</evidence>
<evidence type="ECO:0000269" key="4">
    <source>
    </source>
</evidence>
<evidence type="ECO:0000305" key="5"/>
<keyword id="KW-0007">Acetylation</keyword>
<keyword id="KW-0539">Nucleus</keyword>
<keyword id="KW-0597">Phosphoprotein</keyword>
<keyword id="KW-1185">Reference proteome</keyword>
<keyword id="KW-0804">Transcription</keyword>
<keyword id="KW-0805">Transcription regulation</keyword>
<comment type="function">
    <text evidence="1">TFIIA is a component of the transcription machinery of RNA polymerase II and plays an important role in transcriptional activation. TFIIA in a complex with TBP mediates transcriptional activity (By similarity).</text>
</comment>
<comment type="subunit">
    <text evidence="2">TFIIA is a heterodimer of the large unprocessed subunit 1 and a small subunit gamma. It was originally believed to be a heterotrimer of an alpha (p35), a beta (p19) and a gamma subunit (p12). TFIIA forms a complex with TBP. Part of TBP-based Pol II pre-initiation complex (PIC), in which Pol II core assembles with general transcription factors and other specific initiation factors including GTF2E1, GTF2E2, GTF2F1, GTF2F2, TCEA1, ERCC2, ERCC3, GTF2H2, GTF2H3, GTF2H4, GTF2H5, GTF2A1, GTF2A2, GTF2B and TBP; this large multi-subunit PIC complex mediates DNA unwinding and targets Pol II core to the transcription start site where the first phosphodiester bond forms.</text>
</comment>
<comment type="subcellular location">
    <subcellularLocation>
        <location evidence="1">Nucleus</location>
    </subcellularLocation>
</comment>
<comment type="tissue specificity">
    <text evidence="4">Expressed in pachytene spermatocytes and spermatids.</text>
</comment>
<comment type="induction">
    <text evidence="4">Up-regulated during germ cell differentiation in testis.</text>
</comment>
<comment type="PTM">
    <text evidence="1">The alpha and beta subunits are postranslationally produced from the precursor form by TASP1. The cleavage promotes proteasomal degradation (By similarity).</text>
</comment>
<comment type="similarity">
    <text evidence="5">Belongs to the TFIIA subunit 1 family.</text>
</comment>
<comment type="sequence caution" evidence="5">
    <conflict type="erroneous initiation">
        <sequence resource="EMBL-CDS" id="BAC33430"/>
    </conflict>
</comment>
<proteinExistence type="evidence at protein level"/>
<accession>Q99PM3</accession>
<accession>Q8C812</accession>
<reference key="1">
    <citation type="journal article" date="2001" name="Biol. Reprod.">
        <title>TFIIAalpha/beta-like factor is encoded by a germ cell-specific gene whose expression is up-regulated with other general transcription factors during spermatogenesis in the mouse.</title>
        <authorList>
            <person name="Han S."/>
            <person name="Zhou L."/>
            <person name="Upadhyaya A.B."/>
            <person name="Lee S.H."/>
            <person name="Parker K.L."/>
            <person name="DeJong J."/>
        </authorList>
    </citation>
    <scope>NUCLEOTIDE SEQUENCE [MRNA]</scope>
    <scope>INDUCTION</scope>
    <scope>TISSUE SPECIFICITY</scope>
    <source>
        <tissue>Testis</tissue>
    </source>
</reference>
<reference key="2">
    <citation type="journal article" date="2005" name="Science">
        <title>The transcriptional landscape of the mammalian genome.</title>
        <authorList>
            <person name="Carninci P."/>
            <person name="Kasukawa T."/>
            <person name="Katayama S."/>
            <person name="Gough J."/>
            <person name="Frith M.C."/>
            <person name="Maeda N."/>
            <person name="Oyama R."/>
            <person name="Ravasi T."/>
            <person name="Lenhard B."/>
            <person name="Wells C."/>
            <person name="Kodzius R."/>
            <person name="Shimokawa K."/>
            <person name="Bajic V.B."/>
            <person name="Brenner S.E."/>
            <person name="Batalov S."/>
            <person name="Forrest A.R."/>
            <person name="Zavolan M."/>
            <person name="Davis M.J."/>
            <person name="Wilming L.G."/>
            <person name="Aidinis V."/>
            <person name="Allen J.E."/>
            <person name="Ambesi-Impiombato A."/>
            <person name="Apweiler R."/>
            <person name="Aturaliya R.N."/>
            <person name="Bailey T.L."/>
            <person name="Bansal M."/>
            <person name="Baxter L."/>
            <person name="Beisel K.W."/>
            <person name="Bersano T."/>
            <person name="Bono H."/>
            <person name="Chalk A.M."/>
            <person name="Chiu K.P."/>
            <person name="Choudhary V."/>
            <person name="Christoffels A."/>
            <person name="Clutterbuck D.R."/>
            <person name="Crowe M.L."/>
            <person name="Dalla E."/>
            <person name="Dalrymple B.P."/>
            <person name="de Bono B."/>
            <person name="Della Gatta G."/>
            <person name="di Bernardo D."/>
            <person name="Down T."/>
            <person name="Engstrom P."/>
            <person name="Fagiolini M."/>
            <person name="Faulkner G."/>
            <person name="Fletcher C.F."/>
            <person name="Fukushima T."/>
            <person name="Furuno M."/>
            <person name="Futaki S."/>
            <person name="Gariboldi M."/>
            <person name="Georgii-Hemming P."/>
            <person name="Gingeras T.R."/>
            <person name="Gojobori T."/>
            <person name="Green R.E."/>
            <person name="Gustincich S."/>
            <person name="Harbers M."/>
            <person name="Hayashi Y."/>
            <person name="Hensch T.K."/>
            <person name="Hirokawa N."/>
            <person name="Hill D."/>
            <person name="Huminiecki L."/>
            <person name="Iacono M."/>
            <person name="Ikeo K."/>
            <person name="Iwama A."/>
            <person name="Ishikawa T."/>
            <person name="Jakt M."/>
            <person name="Kanapin A."/>
            <person name="Katoh M."/>
            <person name="Kawasawa Y."/>
            <person name="Kelso J."/>
            <person name="Kitamura H."/>
            <person name="Kitano H."/>
            <person name="Kollias G."/>
            <person name="Krishnan S.P."/>
            <person name="Kruger A."/>
            <person name="Kummerfeld S.K."/>
            <person name="Kurochkin I.V."/>
            <person name="Lareau L.F."/>
            <person name="Lazarevic D."/>
            <person name="Lipovich L."/>
            <person name="Liu J."/>
            <person name="Liuni S."/>
            <person name="McWilliam S."/>
            <person name="Madan Babu M."/>
            <person name="Madera M."/>
            <person name="Marchionni L."/>
            <person name="Matsuda H."/>
            <person name="Matsuzawa S."/>
            <person name="Miki H."/>
            <person name="Mignone F."/>
            <person name="Miyake S."/>
            <person name="Morris K."/>
            <person name="Mottagui-Tabar S."/>
            <person name="Mulder N."/>
            <person name="Nakano N."/>
            <person name="Nakauchi H."/>
            <person name="Ng P."/>
            <person name="Nilsson R."/>
            <person name="Nishiguchi S."/>
            <person name="Nishikawa S."/>
            <person name="Nori F."/>
            <person name="Ohara O."/>
            <person name="Okazaki Y."/>
            <person name="Orlando V."/>
            <person name="Pang K.C."/>
            <person name="Pavan W.J."/>
            <person name="Pavesi G."/>
            <person name="Pesole G."/>
            <person name="Petrovsky N."/>
            <person name="Piazza S."/>
            <person name="Reed J."/>
            <person name="Reid J.F."/>
            <person name="Ring B.Z."/>
            <person name="Ringwald M."/>
            <person name="Rost B."/>
            <person name="Ruan Y."/>
            <person name="Salzberg S.L."/>
            <person name="Sandelin A."/>
            <person name="Schneider C."/>
            <person name="Schoenbach C."/>
            <person name="Sekiguchi K."/>
            <person name="Semple C.A."/>
            <person name="Seno S."/>
            <person name="Sessa L."/>
            <person name="Sheng Y."/>
            <person name="Shibata Y."/>
            <person name="Shimada H."/>
            <person name="Shimada K."/>
            <person name="Silva D."/>
            <person name="Sinclair B."/>
            <person name="Sperling S."/>
            <person name="Stupka E."/>
            <person name="Sugiura K."/>
            <person name="Sultana R."/>
            <person name="Takenaka Y."/>
            <person name="Taki K."/>
            <person name="Tammoja K."/>
            <person name="Tan S.L."/>
            <person name="Tang S."/>
            <person name="Taylor M.S."/>
            <person name="Tegner J."/>
            <person name="Teichmann S.A."/>
            <person name="Ueda H.R."/>
            <person name="van Nimwegen E."/>
            <person name="Verardo R."/>
            <person name="Wei C.L."/>
            <person name="Yagi K."/>
            <person name="Yamanishi H."/>
            <person name="Zabarovsky E."/>
            <person name="Zhu S."/>
            <person name="Zimmer A."/>
            <person name="Hide W."/>
            <person name="Bult C."/>
            <person name="Grimmond S.M."/>
            <person name="Teasdale R.D."/>
            <person name="Liu E.T."/>
            <person name="Brusic V."/>
            <person name="Quackenbush J."/>
            <person name="Wahlestedt C."/>
            <person name="Mattick J.S."/>
            <person name="Hume D.A."/>
            <person name="Kai C."/>
            <person name="Sasaki D."/>
            <person name="Tomaru Y."/>
            <person name="Fukuda S."/>
            <person name="Kanamori-Katayama M."/>
            <person name="Suzuki M."/>
            <person name="Aoki J."/>
            <person name="Arakawa T."/>
            <person name="Iida J."/>
            <person name="Imamura K."/>
            <person name="Itoh M."/>
            <person name="Kato T."/>
            <person name="Kawaji H."/>
            <person name="Kawagashira N."/>
            <person name="Kawashima T."/>
            <person name="Kojima M."/>
            <person name="Kondo S."/>
            <person name="Konno H."/>
            <person name="Nakano K."/>
            <person name="Ninomiya N."/>
            <person name="Nishio T."/>
            <person name="Okada M."/>
            <person name="Plessy C."/>
            <person name="Shibata K."/>
            <person name="Shiraki T."/>
            <person name="Suzuki S."/>
            <person name="Tagami M."/>
            <person name="Waki K."/>
            <person name="Watahiki A."/>
            <person name="Okamura-Oho Y."/>
            <person name="Suzuki H."/>
            <person name="Kawai J."/>
            <person name="Hayashizaki Y."/>
        </authorList>
    </citation>
    <scope>NUCLEOTIDE SEQUENCE [LARGE SCALE MRNA] OF 11-378</scope>
    <source>
        <strain>C57BL/6J</strain>
        <tissue>Cerebellum</tissue>
    </source>
</reference>
<reference key="3">
    <citation type="journal article" date="2010" name="Cell">
        <title>A tissue-specific atlas of mouse protein phosphorylation and expression.</title>
        <authorList>
            <person name="Huttlin E.L."/>
            <person name="Jedrychowski M.P."/>
            <person name="Elias J.E."/>
            <person name="Goswami T."/>
            <person name="Rad R."/>
            <person name="Beausoleil S.A."/>
            <person name="Villen J."/>
            <person name="Haas W."/>
            <person name="Sowa M.E."/>
            <person name="Gygi S.P."/>
        </authorList>
    </citation>
    <scope>IDENTIFICATION BY MASS SPECTROMETRY [LARGE SCALE ANALYSIS]</scope>
    <source>
        <tissue>Brain</tissue>
        <tissue>Heart</tissue>
        <tissue>Lung</tissue>
        <tissue>Spleen</tissue>
        <tissue>Testis</tissue>
    </source>
</reference>
<gene>
    <name type="primary">Gtf2a1</name>
</gene>
<protein>
    <recommendedName>
        <fullName>Transcription initiation factor IIA subunit 1</fullName>
    </recommendedName>
    <alternativeName>
        <fullName>General transcription factor IIA subunit 1</fullName>
    </alternativeName>
    <component>
        <recommendedName>
            <fullName>Transcription initiation factor IIA alpha chain</fullName>
        </recommendedName>
        <alternativeName>
            <fullName>TFIIA p35 subunit</fullName>
        </alternativeName>
    </component>
    <component>
        <recommendedName>
            <fullName>Transcription initiation factor IIA beta chain</fullName>
        </recommendedName>
        <alternativeName>
            <fullName>TFIIA p19 subunit</fullName>
        </alternativeName>
    </component>
</protein>
<organism>
    <name type="scientific">Mus musculus</name>
    <name type="common">Mouse</name>
    <dbReference type="NCBI Taxonomy" id="10090"/>
    <lineage>
        <taxon>Eukaryota</taxon>
        <taxon>Metazoa</taxon>
        <taxon>Chordata</taxon>
        <taxon>Craniata</taxon>
        <taxon>Vertebrata</taxon>
        <taxon>Euteleostomi</taxon>
        <taxon>Mammalia</taxon>
        <taxon>Eutheria</taxon>
        <taxon>Euarchontoglires</taxon>
        <taxon>Glires</taxon>
        <taxon>Rodentia</taxon>
        <taxon>Myomorpha</taxon>
        <taxon>Muroidea</taxon>
        <taxon>Muridae</taxon>
        <taxon>Murinae</taxon>
        <taxon>Mus</taxon>
        <taxon>Mus</taxon>
    </lineage>
</organism>
<dbReference type="EMBL" id="AF250834">
    <property type="protein sequence ID" value="AAG50431.1"/>
    <property type="molecule type" value="mRNA"/>
</dbReference>
<dbReference type="EMBL" id="AK048711">
    <property type="protein sequence ID" value="BAC33430.1"/>
    <property type="status" value="ALT_INIT"/>
    <property type="molecule type" value="mRNA"/>
</dbReference>
<dbReference type="CCDS" id="CCDS26089.1"/>
<dbReference type="RefSeq" id="NP_113568.2">
    <property type="nucleotide sequence ID" value="NM_031391.2"/>
</dbReference>
<dbReference type="RefSeq" id="NP_780544.1">
    <property type="nucleotide sequence ID" value="NM_175335.3"/>
</dbReference>
<dbReference type="BioGRID" id="219952">
    <property type="interactions" value="25"/>
</dbReference>
<dbReference type="ComplexPortal" id="CPX-743">
    <property type="entry name" value="Transcription factor complex TFIIA"/>
</dbReference>
<dbReference type="FunCoup" id="Q99PM3">
    <property type="interactions" value="4168"/>
</dbReference>
<dbReference type="IntAct" id="Q99PM3">
    <property type="interactions" value="12"/>
</dbReference>
<dbReference type="MINT" id="Q99PM3"/>
<dbReference type="STRING" id="10090.ENSMUSP00000021345"/>
<dbReference type="iPTMnet" id="Q99PM3"/>
<dbReference type="PhosphoSitePlus" id="Q99PM3"/>
<dbReference type="jPOST" id="Q99PM3"/>
<dbReference type="PaxDb" id="10090-ENSMUSP00000021345"/>
<dbReference type="ProteomicsDB" id="263289"/>
<dbReference type="Pumba" id="Q99PM3"/>
<dbReference type="Antibodypedia" id="76">
    <property type="antibodies" value="311 antibodies from 33 providers"/>
</dbReference>
<dbReference type="DNASU" id="83602"/>
<dbReference type="Ensembl" id="ENSMUST00000021345.14">
    <property type="protein sequence ID" value="ENSMUSP00000021345.7"/>
    <property type="gene ID" value="ENSMUSG00000020962.15"/>
</dbReference>
<dbReference type="GeneID" id="83602"/>
<dbReference type="KEGG" id="mmu:83602"/>
<dbReference type="UCSC" id="uc007okr.2">
    <property type="organism name" value="mouse"/>
</dbReference>
<dbReference type="AGR" id="MGI:1933277"/>
<dbReference type="CTD" id="2957"/>
<dbReference type="MGI" id="MGI:1933277">
    <property type="gene designation" value="Gtf2a1"/>
</dbReference>
<dbReference type="VEuPathDB" id="HostDB:ENSMUSG00000020962"/>
<dbReference type="eggNOG" id="KOG2652">
    <property type="taxonomic scope" value="Eukaryota"/>
</dbReference>
<dbReference type="GeneTree" id="ENSGT00940000156726"/>
<dbReference type="HOGENOM" id="CLU_030027_5_0_1"/>
<dbReference type="InParanoid" id="Q99PM3"/>
<dbReference type="OMA" id="EVCDASQ"/>
<dbReference type="OrthoDB" id="6275927at2759"/>
<dbReference type="PhylomeDB" id="Q99PM3"/>
<dbReference type="TreeFam" id="TF350445"/>
<dbReference type="Reactome" id="R-MMU-674695">
    <property type="pathway name" value="RNA Polymerase II Pre-transcription Events"/>
</dbReference>
<dbReference type="Reactome" id="R-MMU-6807505">
    <property type="pathway name" value="RNA polymerase II transcribes snRNA genes"/>
</dbReference>
<dbReference type="Reactome" id="R-MMU-73776">
    <property type="pathway name" value="RNA Polymerase II Promoter Escape"/>
</dbReference>
<dbReference type="Reactome" id="R-MMU-73779">
    <property type="pathway name" value="RNA Polymerase II Transcription Pre-Initiation And Promoter Opening"/>
</dbReference>
<dbReference type="Reactome" id="R-MMU-75953">
    <property type="pathway name" value="RNA Polymerase II Transcription Initiation"/>
</dbReference>
<dbReference type="Reactome" id="R-MMU-76042">
    <property type="pathway name" value="RNA Polymerase II Transcription Initiation And Promoter Clearance"/>
</dbReference>
<dbReference type="Reactome" id="R-MMU-9018519">
    <property type="pathway name" value="Estrogen-dependent gene expression"/>
</dbReference>
<dbReference type="BioGRID-ORCS" id="83602">
    <property type="hits" value="15 hits in 75 CRISPR screens"/>
</dbReference>
<dbReference type="ChiTaRS" id="Gtf2a1">
    <property type="organism name" value="mouse"/>
</dbReference>
<dbReference type="PRO" id="PR:Q99PM3"/>
<dbReference type="Proteomes" id="UP000000589">
    <property type="component" value="Chromosome 12"/>
</dbReference>
<dbReference type="RNAct" id="Q99PM3">
    <property type="molecule type" value="protein"/>
</dbReference>
<dbReference type="Bgee" id="ENSMUSG00000020962">
    <property type="expression patterns" value="Expressed in animal zygote and 267 other cell types or tissues"/>
</dbReference>
<dbReference type="ExpressionAtlas" id="Q99PM3">
    <property type="expression patterns" value="baseline and differential"/>
</dbReference>
<dbReference type="GO" id="GO:0005737">
    <property type="term" value="C:cytoplasm"/>
    <property type="evidence" value="ECO:0000314"/>
    <property type="project" value="MGI"/>
</dbReference>
<dbReference type="GO" id="GO:0005829">
    <property type="term" value="C:cytosol"/>
    <property type="evidence" value="ECO:0007669"/>
    <property type="project" value="Ensembl"/>
</dbReference>
<dbReference type="GO" id="GO:0005634">
    <property type="term" value="C:nucleus"/>
    <property type="evidence" value="ECO:0000314"/>
    <property type="project" value="MGI"/>
</dbReference>
<dbReference type="GO" id="GO:0005672">
    <property type="term" value="C:transcription factor TFIIA complex"/>
    <property type="evidence" value="ECO:0000314"/>
    <property type="project" value="MGI"/>
</dbReference>
<dbReference type="GO" id="GO:0005669">
    <property type="term" value="C:transcription factor TFIID complex"/>
    <property type="evidence" value="ECO:0007669"/>
    <property type="project" value="Ensembl"/>
</dbReference>
<dbReference type="GO" id="GO:0097550">
    <property type="term" value="C:transcription preinitiation complex"/>
    <property type="evidence" value="ECO:0007669"/>
    <property type="project" value="Ensembl"/>
</dbReference>
<dbReference type="GO" id="GO:0046982">
    <property type="term" value="F:protein heterodimerization activity"/>
    <property type="evidence" value="ECO:0007669"/>
    <property type="project" value="Ensembl"/>
</dbReference>
<dbReference type="GO" id="GO:0000979">
    <property type="term" value="F:RNA polymerase II core promoter sequence-specific DNA binding"/>
    <property type="evidence" value="ECO:0007669"/>
    <property type="project" value="Ensembl"/>
</dbReference>
<dbReference type="GO" id="GO:0016251">
    <property type="term" value="F:RNA polymerase II general transcription initiation factor activity"/>
    <property type="evidence" value="ECO:0007669"/>
    <property type="project" value="Ensembl"/>
</dbReference>
<dbReference type="GO" id="GO:0001091">
    <property type="term" value="F:RNA polymerase II general transcription initiation factor binding"/>
    <property type="evidence" value="ECO:0007669"/>
    <property type="project" value="Ensembl"/>
</dbReference>
<dbReference type="GO" id="GO:0061629">
    <property type="term" value="F:RNA polymerase II-specific DNA-binding transcription factor binding"/>
    <property type="evidence" value="ECO:0000353"/>
    <property type="project" value="MGI"/>
</dbReference>
<dbReference type="GO" id="GO:0017025">
    <property type="term" value="F:TBP-class protein binding"/>
    <property type="evidence" value="ECO:0007669"/>
    <property type="project" value="Ensembl"/>
</dbReference>
<dbReference type="GO" id="GO:0045944">
    <property type="term" value="P:positive regulation of transcription by RNA polymerase II"/>
    <property type="evidence" value="ECO:0000266"/>
    <property type="project" value="ComplexPortal"/>
</dbReference>
<dbReference type="GO" id="GO:0060261">
    <property type="term" value="P:positive regulation of transcription initiation by RNA polymerase II"/>
    <property type="evidence" value="ECO:0000266"/>
    <property type="project" value="ComplexPortal"/>
</dbReference>
<dbReference type="GO" id="GO:0051123">
    <property type="term" value="P:RNA polymerase II preinitiation complex assembly"/>
    <property type="evidence" value="ECO:0000303"/>
    <property type="project" value="ComplexPortal"/>
</dbReference>
<dbReference type="CDD" id="cd07976">
    <property type="entry name" value="TFIIA_alpha_beta_like"/>
    <property type="match status" value="2"/>
</dbReference>
<dbReference type="FunFam" id="1.10.287.100:FF:000001">
    <property type="entry name" value="Transcription initiation factor IIA subunit"/>
    <property type="match status" value="1"/>
</dbReference>
<dbReference type="FunFam" id="2.30.18.10:FF:000002">
    <property type="entry name" value="Transcription initiation factor IIA subunit 1"/>
    <property type="match status" value="1"/>
</dbReference>
<dbReference type="Gene3D" id="1.10.287.100">
    <property type="match status" value="1"/>
</dbReference>
<dbReference type="Gene3D" id="2.30.18.10">
    <property type="entry name" value="Transcription factor IIA (TFIIA), beta-barrel domain"/>
    <property type="match status" value="1"/>
</dbReference>
<dbReference type="InterPro" id="IPR004855">
    <property type="entry name" value="TFIIA_asu/bsu"/>
</dbReference>
<dbReference type="InterPro" id="IPR009088">
    <property type="entry name" value="TFIIA_b-brl"/>
</dbReference>
<dbReference type="PANTHER" id="PTHR12694">
    <property type="entry name" value="TRANSCRIPTION INITIATION FACTOR IIA SUBUNIT 1"/>
    <property type="match status" value="1"/>
</dbReference>
<dbReference type="PANTHER" id="PTHR12694:SF7">
    <property type="entry name" value="TRANSCRIPTION INITIATION FACTOR IIA SUBUNIT 1"/>
    <property type="match status" value="1"/>
</dbReference>
<dbReference type="Pfam" id="PF03153">
    <property type="entry name" value="TFIIA"/>
    <property type="match status" value="2"/>
</dbReference>
<dbReference type="SMART" id="SM01371">
    <property type="entry name" value="TFIIA"/>
    <property type="match status" value="1"/>
</dbReference>
<dbReference type="SUPFAM" id="SSF47396">
    <property type="entry name" value="Transcription factor IIA (TFIIA), alpha-helical domain"/>
    <property type="match status" value="1"/>
</dbReference>
<dbReference type="SUPFAM" id="SSF50784">
    <property type="entry name" value="Transcription factor IIA (TFIIA), beta-barrel domain"/>
    <property type="match status" value="1"/>
</dbReference>
<name>TF2AA_MOUSE</name>
<sequence length="378" mass="41614">MANSANTNTVPKLYRSVIEDVINDVRDIFLDDGVDEQVLMELKTLWENKLMQSRAVDGFHSEEQQLLLQVQQQHQPQQQQHHHHHHQHQQAQPQQTVPQQAQTQQVLIPASQQATAPQVIVPDSKLLQHMNASSITSAAATAATLALPAGVTPVQQLLTNSGQLLQVVRAANGAQYILQPQQSVVLQQQVIPQMQPGGVQAPVIQQVLAPLPGGISPQTGVIIQPQQILFTGNKTQVIPTTVAAPAPAQAPMPAAGQQQPQAQPAQQQAPLVLQVDGTGDTSSEEDEDEEEDYDDDEEEDKEKDGAEDGQVEEEPLNSEDDVSDEEGQELFDTENVVVCQYDKIHRSKNKWKFHLKDGIMNLNGRDYIFSKAIGDAEW</sequence>
<feature type="initiator methionine" description="Removed" evidence="2">
    <location>
        <position position="1"/>
    </location>
</feature>
<feature type="chain" id="PRO_0000042595" description="Transcription initiation factor IIA subunit 1">
    <location>
        <begin position="2"/>
        <end position="378"/>
    </location>
</feature>
<feature type="chain" id="PRO_0000042596" description="Transcription initiation factor IIA alpha chain">
    <location>
        <begin position="2"/>
        <end position="276"/>
    </location>
</feature>
<feature type="chain" id="PRO_0000042597" description="Transcription initiation factor IIA beta chain">
    <location>
        <begin position="277"/>
        <end position="378"/>
    </location>
</feature>
<feature type="region of interest" description="Disordered" evidence="3">
    <location>
        <begin position="69"/>
        <end position="108"/>
    </location>
</feature>
<feature type="region of interest" description="Disordered" evidence="3">
    <location>
        <begin position="247"/>
        <end position="331"/>
    </location>
</feature>
<feature type="compositionally biased region" description="Low complexity" evidence="3">
    <location>
        <begin position="69"/>
        <end position="79"/>
    </location>
</feature>
<feature type="compositionally biased region" description="Low complexity" evidence="3">
    <location>
        <begin position="89"/>
        <end position="106"/>
    </location>
</feature>
<feature type="compositionally biased region" description="Low complexity" evidence="3">
    <location>
        <begin position="247"/>
        <end position="281"/>
    </location>
</feature>
<feature type="compositionally biased region" description="Acidic residues" evidence="3">
    <location>
        <begin position="282"/>
        <end position="331"/>
    </location>
</feature>
<feature type="binding site" evidence="2">
    <location>
        <position position="345"/>
    </location>
    <ligand>
        <name>DNA</name>
        <dbReference type="ChEBI" id="CHEBI:16991"/>
    </ligand>
</feature>
<feature type="binding site" evidence="2">
    <location>
        <position position="346"/>
    </location>
    <ligand>
        <name>DNA</name>
        <dbReference type="ChEBI" id="CHEBI:16991"/>
    </ligand>
</feature>
<feature type="site" description="Cleavage; by TASP1">
    <location>
        <begin position="276"/>
        <end position="277"/>
    </location>
</feature>
<feature type="modified residue" description="N-acetylalanine" evidence="2">
    <location>
        <position position="2"/>
    </location>
</feature>
<feature type="modified residue" description="Phosphoserine; by TAF1" evidence="2">
    <location>
        <position position="282"/>
    </location>
</feature>
<feature type="modified residue" description="Phosphoserine; by TAF1" evidence="2">
    <location>
        <position position="283"/>
    </location>
</feature>
<feature type="modified residue" description="Phosphoserine; by TAF1" evidence="2">
    <location>
        <position position="318"/>
    </location>
</feature>
<feature type="modified residue" description="Phosphoserine; by TAF1" evidence="2">
    <location>
        <position position="323"/>
    </location>
</feature>
<feature type="sequence conflict" description="In Ref. 1; AAG50431." evidence="5" ref="1">
    <original>V</original>
    <variation>G</variation>
    <location>
        <position position="121"/>
    </location>
</feature>
<feature type="sequence conflict" description="In Ref. 1; AAG50431." evidence="5" ref="1">
    <original>D</original>
    <variation>G</variation>
    <location>
        <position position="324"/>
    </location>
</feature>
<feature type="sequence conflict" description="In Ref. 1; AAG50431." evidence="5" ref="1">
    <original>T</original>
    <variation>A</variation>
    <location>
        <position position="333"/>
    </location>
</feature>